<protein>
    <recommendedName>
        <fullName evidence="1">Methylthioribose-1-phosphate isomerase</fullName>
        <shortName evidence="1">M1Pi</shortName>
        <shortName evidence="1">MTR-1-P isomerase</shortName>
        <ecNumber evidence="1">5.3.1.23</ecNumber>
    </recommendedName>
    <alternativeName>
        <fullName evidence="1">S-methyl-5-thioribose-1-phosphate isomerase</fullName>
    </alternativeName>
</protein>
<reference key="1">
    <citation type="journal article" date="2006" name="PLoS Genet.">
        <title>The complete genome sequence and comparative genome analysis of the high pathogenicity Yersinia enterocolitica strain 8081.</title>
        <authorList>
            <person name="Thomson N.R."/>
            <person name="Howard S."/>
            <person name="Wren B.W."/>
            <person name="Holden M.T.G."/>
            <person name="Crossman L."/>
            <person name="Challis G.L."/>
            <person name="Churcher C."/>
            <person name="Mungall K."/>
            <person name="Brooks K."/>
            <person name="Chillingworth T."/>
            <person name="Feltwell T."/>
            <person name="Abdellah Z."/>
            <person name="Hauser H."/>
            <person name="Jagels K."/>
            <person name="Maddison M."/>
            <person name="Moule S."/>
            <person name="Sanders M."/>
            <person name="Whitehead S."/>
            <person name="Quail M.A."/>
            <person name="Dougan G."/>
            <person name="Parkhill J."/>
            <person name="Prentice M.B."/>
        </authorList>
    </citation>
    <scope>NUCLEOTIDE SEQUENCE [LARGE SCALE GENOMIC DNA]</scope>
    <source>
        <strain>NCTC 13174 / 8081</strain>
    </source>
</reference>
<proteinExistence type="inferred from homology"/>
<accession>A1JP09</accession>
<name>MTNA_YERE8</name>
<organism>
    <name type="scientific">Yersinia enterocolitica serotype O:8 / biotype 1B (strain NCTC 13174 / 8081)</name>
    <dbReference type="NCBI Taxonomy" id="393305"/>
    <lineage>
        <taxon>Bacteria</taxon>
        <taxon>Pseudomonadati</taxon>
        <taxon>Pseudomonadota</taxon>
        <taxon>Gammaproteobacteria</taxon>
        <taxon>Enterobacterales</taxon>
        <taxon>Yersiniaceae</taxon>
        <taxon>Yersinia</taxon>
    </lineage>
</organism>
<sequence length="346" mass="37326">MQTLNTLDLQTTSLKIVDGKLWILDQQTLPQRQEWLSADTVELLIEHIQALRVRGAPLIGLSASLLLALLAERGLPQAQLEQALIALRESRPTAVNLMNNLARMQQALLHANWVAAMTHEALRLVEEDRELCERIAQHGVQLVKPDSNLLTHCNTGGLATAGIGTAIGVLLRAHQQGKIKQVWVDETRPLLQGGRLTAWELGELGIPYQLICDSMAASLMAQGRVDAVWVGADRIAANGDVANKIGTYSLAVLANYHRIPFYVAAPHTTHDPDCPNGAAIPIEQRDASEVKGVSGGFGHCQWAPANAPVYNPAFDVTPAALISGWVLDSGVITPGQVAAGFFQPKN</sequence>
<feature type="chain" id="PRO_0000357277" description="Methylthioribose-1-phosphate isomerase">
    <location>
        <begin position="1"/>
        <end position="346"/>
    </location>
</feature>
<feature type="active site" description="Proton donor" evidence="1">
    <location>
        <position position="233"/>
    </location>
</feature>
<feature type="binding site" evidence="1">
    <location>
        <begin position="54"/>
        <end position="56"/>
    </location>
    <ligand>
        <name>substrate</name>
    </ligand>
</feature>
<feature type="binding site" evidence="1">
    <location>
        <position position="91"/>
    </location>
    <ligand>
        <name>substrate</name>
    </ligand>
</feature>
<feature type="binding site" evidence="1">
    <location>
        <position position="192"/>
    </location>
    <ligand>
        <name>substrate</name>
    </ligand>
</feature>
<feature type="binding site" evidence="1">
    <location>
        <begin position="243"/>
        <end position="244"/>
    </location>
    <ligand>
        <name>substrate</name>
    </ligand>
</feature>
<feature type="site" description="Transition state stabilizer" evidence="1">
    <location>
        <position position="153"/>
    </location>
</feature>
<comment type="function">
    <text evidence="1">Catalyzes the interconversion of methylthioribose-1-phosphate (MTR-1-P) into methylthioribulose-1-phosphate (MTRu-1-P).</text>
</comment>
<comment type="catalytic activity">
    <reaction evidence="1">
        <text>5-(methylsulfanyl)-alpha-D-ribose 1-phosphate = 5-(methylsulfanyl)-D-ribulose 1-phosphate</text>
        <dbReference type="Rhea" id="RHEA:19989"/>
        <dbReference type="ChEBI" id="CHEBI:58533"/>
        <dbReference type="ChEBI" id="CHEBI:58548"/>
        <dbReference type="EC" id="5.3.1.23"/>
    </reaction>
</comment>
<comment type="pathway">
    <text evidence="1">Amino-acid biosynthesis; L-methionine biosynthesis via salvage pathway; L-methionine from S-methyl-5-thio-alpha-D-ribose 1-phosphate: step 1/6.</text>
</comment>
<comment type="similarity">
    <text evidence="2">Belongs to the eIF-2B alpha/beta/delta subunits family. MtnA subfamily.</text>
</comment>
<dbReference type="EC" id="5.3.1.23" evidence="1"/>
<dbReference type="EMBL" id="AM286415">
    <property type="protein sequence ID" value="CAL13261.1"/>
    <property type="molecule type" value="Genomic_DNA"/>
</dbReference>
<dbReference type="RefSeq" id="WP_011816943.1">
    <property type="nucleotide sequence ID" value="NC_008800.1"/>
</dbReference>
<dbReference type="RefSeq" id="YP_001007405.1">
    <property type="nucleotide sequence ID" value="NC_008800.1"/>
</dbReference>
<dbReference type="SMR" id="A1JP09"/>
<dbReference type="KEGG" id="yen:YE3230"/>
<dbReference type="PATRIC" id="fig|393305.7.peg.3434"/>
<dbReference type="eggNOG" id="COG0182">
    <property type="taxonomic scope" value="Bacteria"/>
</dbReference>
<dbReference type="HOGENOM" id="CLU_016218_1_2_6"/>
<dbReference type="OrthoDB" id="9803436at2"/>
<dbReference type="UniPathway" id="UPA00904">
    <property type="reaction ID" value="UER00874"/>
</dbReference>
<dbReference type="Proteomes" id="UP000000642">
    <property type="component" value="Chromosome"/>
</dbReference>
<dbReference type="GO" id="GO:0046523">
    <property type="term" value="F:S-methyl-5-thioribose-1-phosphate isomerase activity"/>
    <property type="evidence" value="ECO:0007669"/>
    <property type="project" value="UniProtKB-UniRule"/>
</dbReference>
<dbReference type="GO" id="GO:0019509">
    <property type="term" value="P:L-methionine salvage from methylthioadenosine"/>
    <property type="evidence" value="ECO:0007669"/>
    <property type="project" value="UniProtKB-UniRule"/>
</dbReference>
<dbReference type="FunFam" id="3.40.50.10470:FF:000006">
    <property type="entry name" value="Methylthioribose-1-phosphate isomerase"/>
    <property type="match status" value="1"/>
</dbReference>
<dbReference type="Gene3D" id="1.20.120.420">
    <property type="entry name" value="translation initiation factor eif-2b, domain 1"/>
    <property type="match status" value="1"/>
</dbReference>
<dbReference type="Gene3D" id="3.40.50.10470">
    <property type="entry name" value="Translation initiation factor eif-2b, domain 2"/>
    <property type="match status" value="1"/>
</dbReference>
<dbReference type="HAMAP" id="MF_01678">
    <property type="entry name" value="Salvage_MtnA"/>
    <property type="match status" value="1"/>
</dbReference>
<dbReference type="InterPro" id="IPR000649">
    <property type="entry name" value="IF-2B-related"/>
</dbReference>
<dbReference type="InterPro" id="IPR005251">
    <property type="entry name" value="IF-M1Pi"/>
</dbReference>
<dbReference type="InterPro" id="IPR042529">
    <property type="entry name" value="IF_2B-like_C"/>
</dbReference>
<dbReference type="InterPro" id="IPR011559">
    <property type="entry name" value="Initiation_fac_2B_a/b/d"/>
</dbReference>
<dbReference type="InterPro" id="IPR027363">
    <property type="entry name" value="M1Pi_N"/>
</dbReference>
<dbReference type="InterPro" id="IPR037171">
    <property type="entry name" value="NagB/RpiA_transferase-like"/>
</dbReference>
<dbReference type="NCBIfam" id="TIGR00524">
    <property type="entry name" value="eIF-2B_rel"/>
    <property type="match status" value="1"/>
</dbReference>
<dbReference type="NCBIfam" id="NF004326">
    <property type="entry name" value="PRK05720.1"/>
    <property type="match status" value="1"/>
</dbReference>
<dbReference type="NCBIfam" id="TIGR00512">
    <property type="entry name" value="salvage_mtnA"/>
    <property type="match status" value="1"/>
</dbReference>
<dbReference type="PANTHER" id="PTHR43475">
    <property type="entry name" value="METHYLTHIORIBOSE-1-PHOSPHATE ISOMERASE"/>
    <property type="match status" value="1"/>
</dbReference>
<dbReference type="PANTHER" id="PTHR43475:SF1">
    <property type="entry name" value="METHYLTHIORIBOSE-1-PHOSPHATE ISOMERASE"/>
    <property type="match status" value="1"/>
</dbReference>
<dbReference type="Pfam" id="PF01008">
    <property type="entry name" value="IF-2B"/>
    <property type="match status" value="1"/>
</dbReference>
<dbReference type="SUPFAM" id="SSF100950">
    <property type="entry name" value="NagB/RpiA/CoA transferase-like"/>
    <property type="match status" value="1"/>
</dbReference>
<gene>
    <name evidence="1" type="primary">mtnA</name>
    <name type="ordered locus">YE3230</name>
</gene>
<keyword id="KW-0028">Amino-acid biosynthesis</keyword>
<keyword id="KW-0413">Isomerase</keyword>
<keyword id="KW-0486">Methionine biosynthesis</keyword>
<evidence type="ECO:0000255" key="1">
    <source>
        <dbReference type="HAMAP-Rule" id="MF_01678"/>
    </source>
</evidence>
<evidence type="ECO:0000305" key="2"/>